<comment type="function">
    <text evidence="1">Catalyzes the attachment of proline to tRNA(Pro) in a two-step reaction: proline is first activated by ATP to form Pro-AMP and then transferred to the acceptor end of tRNA(Pro). As ProRS can inadvertently accommodate and process non-cognate amino acids such as alanine and cysteine, to avoid such errors it has two additional distinct editing activities against alanine. One activity is designated as 'pretransfer' editing and involves the tRNA(Pro)-independent hydrolysis of activated Ala-AMP. The other activity is designated 'posttransfer' editing and involves deacylation of mischarged Ala-tRNA(Pro). The misacylated Cys-tRNA(Pro) is not edited by ProRS.</text>
</comment>
<comment type="catalytic activity">
    <reaction evidence="1">
        <text>tRNA(Pro) + L-proline + ATP = L-prolyl-tRNA(Pro) + AMP + diphosphate</text>
        <dbReference type="Rhea" id="RHEA:14305"/>
        <dbReference type="Rhea" id="RHEA-COMP:9700"/>
        <dbReference type="Rhea" id="RHEA-COMP:9702"/>
        <dbReference type="ChEBI" id="CHEBI:30616"/>
        <dbReference type="ChEBI" id="CHEBI:33019"/>
        <dbReference type="ChEBI" id="CHEBI:60039"/>
        <dbReference type="ChEBI" id="CHEBI:78442"/>
        <dbReference type="ChEBI" id="CHEBI:78532"/>
        <dbReference type="ChEBI" id="CHEBI:456215"/>
        <dbReference type="EC" id="6.1.1.15"/>
    </reaction>
</comment>
<comment type="subunit">
    <text evidence="1">Homodimer.</text>
</comment>
<comment type="subcellular location">
    <subcellularLocation>
        <location evidence="1">Cytoplasm</location>
    </subcellularLocation>
</comment>
<comment type="domain">
    <text evidence="1">Consists of three domains: the N-terminal catalytic domain, the editing domain and the C-terminal anticodon-binding domain.</text>
</comment>
<comment type="similarity">
    <text evidence="1">Belongs to the class-II aminoacyl-tRNA synthetase family. ProS type 1 subfamily.</text>
</comment>
<feature type="chain" id="PRO_0000288351" description="Proline--tRNA ligase">
    <location>
        <begin position="1"/>
        <end position="584"/>
    </location>
</feature>
<gene>
    <name evidence="1" type="primary">proS</name>
    <name type="ordered locus">Mkms_2122</name>
</gene>
<evidence type="ECO:0000255" key="1">
    <source>
        <dbReference type="HAMAP-Rule" id="MF_01569"/>
    </source>
</evidence>
<proteinExistence type="inferred from homology"/>
<dbReference type="EC" id="6.1.1.15" evidence="1"/>
<dbReference type="EMBL" id="CP000518">
    <property type="protein sequence ID" value="ABL91320.1"/>
    <property type="molecule type" value="Genomic_DNA"/>
</dbReference>
<dbReference type="SMR" id="A1UER2"/>
<dbReference type="STRING" id="189918.Mkms_2122"/>
<dbReference type="KEGG" id="mkm:Mkms_2122"/>
<dbReference type="HOGENOM" id="CLU_016739_0_0_11"/>
<dbReference type="OrthoDB" id="9809052at2"/>
<dbReference type="GO" id="GO:0005829">
    <property type="term" value="C:cytosol"/>
    <property type="evidence" value="ECO:0007669"/>
    <property type="project" value="TreeGrafter"/>
</dbReference>
<dbReference type="GO" id="GO:0002161">
    <property type="term" value="F:aminoacyl-tRNA deacylase activity"/>
    <property type="evidence" value="ECO:0007669"/>
    <property type="project" value="InterPro"/>
</dbReference>
<dbReference type="GO" id="GO:0005524">
    <property type="term" value="F:ATP binding"/>
    <property type="evidence" value="ECO:0007669"/>
    <property type="project" value="UniProtKB-UniRule"/>
</dbReference>
<dbReference type="GO" id="GO:0004827">
    <property type="term" value="F:proline-tRNA ligase activity"/>
    <property type="evidence" value="ECO:0007669"/>
    <property type="project" value="UniProtKB-UniRule"/>
</dbReference>
<dbReference type="GO" id="GO:0006433">
    <property type="term" value="P:prolyl-tRNA aminoacylation"/>
    <property type="evidence" value="ECO:0007669"/>
    <property type="project" value="UniProtKB-UniRule"/>
</dbReference>
<dbReference type="CDD" id="cd00861">
    <property type="entry name" value="ProRS_anticodon_short"/>
    <property type="match status" value="1"/>
</dbReference>
<dbReference type="CDD" id="cd00779">
    <property type="entry name" value="ProRS_core_prok"/>
    <property type="match status" value="1"/>
</dbReference>
<dbReference type="FunFam" id="3.30.930.10:FF:000065">
    <property type="entry name" value="Proline--tRNA ligase"/>
    <property type="match status" value="1"/>
</dbReference>
<dbReference type="FunFam" id="3.30.930.10:FF:000070">
    <property type="entry name" value="Proline--tRNA ligase"/>
    <property type="match status" value="1"/>
</dbReference>
<dbReference type="Gene3D" id="3.40.50.800">
    <property type="entry name" value="Anticodon-binding domain"/>
    <property type="match status" value="1"/>
</dbReference>
<dbReference type="Gene3D" id="3.30.930.10">
    <property type="entry name" value="Bira Bifunctional Protein, Domain 2"/>
    <property type="match status" value="2"/>
</dbReference>
<dbReference type="Gene3D" id="3.90.960.10">
    <property type="entry name" value="YbaK/aminoacyl-tRNA synthetase-associated domain"/>
    <property type="match status" value="1"/>
</dbReference>
<dbReference type="HAMAP" id="MF_01569">
    <property type="entry name" value="Pro_tRNA_synth_type1"/>
    <property type="match status" value="1"/>
</dbReference>
<dbReference type="InterPro" id="IPR002314">
    <property type="entry name" value="aa-tRNA-synt_IIb"/>
</dbReference>
<dbReference type="InterPro" id="IPR006195">
    <property type="entry name" value="aa-tRNA-synth_II"/>
</dbReference>
<dbReference type="InterPro" id="IPR045864">
    <property type="entry name" value="aa-tRNA-synth_II/BPL/LPL"/>
</dbReference>
<dbReference type="InterPro" id="IPR004154">
    <property type="entry name" value="Anticodon-bd"/>
</dbReference>
<dbReference type="InterPro" id="IPR036621">
    <property type="entry name" value="Anticodon-bd_dom_sf"/>
</dbReference>
<dbReference type="InterPro" id="IPR002316">
    <property type="entry name" value="Pro-tRNA-ligase_IIa"/>
</dbReference>
<dbReference type="InterPro" id="IPR004500">
    <property type="entry name" value="Pro-tRNA-synth_IIa_bac-type"/>
</dbReference>
<dbReference type="InterPro" id="IPR023717">
    <property type="entry name" value="Pro-tRNA-Synthase_IIa_type1"/>
</dbReference>
<dbReference type="InterPro" id="IPR050062">
    <property type="entry name" value="Pro-tRNA_synthetase"/>
</dbReference>
<dbReference type="InterPro" id="IPR044140">
    <property type="entry name" value="ProRS_anticodon_short"/>
</dbReference>
<dbReference type="InterPro" id="IPR033730">
    <property type="entry name" value="ProRS_core_prok"/>
</dbReference>
<dbReference type="InterPro" id="IPR036754">
    <property type="entry name" value="YbaK/aa-tRNA-synt-asso_dom_sf"/>
</dbReference>
<dbReference type="InterPro" id="IPR007214">
    <property type="entry name" value="YbaK/aa-tRNA-synth-assoc-dom"/>
</dbReference>
<dbReference type="NCBIfam" id="NF006625">
    <property type="entry name" value="PRK09194.1"/>
    <property type="match status" value="1"/>
</dbReference>
<dbReference type="NCBIfam" id="TIGR00409">
    <property type="entry name" value="proS_fam_II"/>
    <property type="match status" value="1"/>
</dbReference>
<dbReference type="PANTHER" id="PTHR42753">
    <property type="entry name" value="MITOCHONDRIAL RIBOSOME PROTEIN L39/PROLYL-TRNA LIGASE FAMILY MEMBER"/>
    <property type="match status" value="1"/>
</dbReference>
<dbReference type="PANTHER" id="PTHR42753:SF2">
    <property type="entry name" value="PROLINE--TRNA LIGASE"/>
    <property type="match status" value="1"/>
</dbReference>
<dbReference type="Pfam" id="PF03129">
    <property type="entry name" value="HGTP_anticodon"/>
    <property type="match status" value="1"/>
</dbReference>
<dbReference type="Pfam" id="PF00587">
    <property type="entry name" value="tRNA-synt_2b"/>
    <property type="match status" value="1"/>
</dbReference>
<dbReference type="Pfam" id="PF04073">
    <property type="entry name" value="tRNA_edit"/>
    <property type="match status" value="1"/>
</dbReference>
<dbReference type="PRINTS" id="PR01046">
    <property type="entry name" value="TRNASYNTHPRO"/>
</dbReference>
<dbReference type="SUPFAM" id="SSF52954">
    <property type="entry name" value="Class II aaRS ABD-related"/>
    <property type="match status" value="1"/>
</dbReference>
<dbReference type="SUPFAM" id="SSF55681">
    <property type="entry name" value="Class II aaRS and biotin synthetases"/>
    <property type="match status" value="1"/>
</dbReference>
<dbReference type="SUPFAM" id="SSF55826">
    <property type="entry name" value="YbaK/ProRS associated domain"/>
    <property type="match status" value="1"/>
</dbReference>
<dbReference type="PROSITE" id="PS50862">
    <property type="entry name" value="AA_TRNA_LIGASE_II"/>
    <property type="match status" value="1"/>
</dbReference>
<organism>
    <name type="scientific">Mycobacterium sp. (strain KMS)</name>
    <dbReference type="NCBI Taxonomy" id="189918"/>
    <lineage>
        <taxon>Bacteria</taxon>
        <taxon>Bacillati</taxon>
        <taxon>Actinomycetota</taxon>
        <taxon>Actinomycetes</taxon>
        <taxon>Mycobacteriales</taxon>
        <taxon>Mycobacteriaceae</taxon>
        <taxon>Mycobacterium</taxon>
    </lineage>
</organism>
<sequence length="584" mass="63945">MITRMSELFLRTLRDDPADAEVPSHKLLIRAGYVRPVGPGLYTWLPLGLRVFRKIEQIVRDEMTAIGGQEILFPALLPRAPYETTNRWTEYGDTLFRLKDRRDNDYLLGPTHEELFTLTVKGEYSSYKDFPLILFQIQTKYRDEARPRAGILRGREFVMKDSYSFDVDDDGLKTAYHLHREAYQRIFARLGVHYVIVSAVSGAMGGSASEEFLAESEVGEDTFVRCLQSGYAANVEAVLTRVPEPLPIEGQPEAVVYDTPDAPTIATLVDWANGADLPNFAGRAVTAADTLKNVLVKVREPGGEWELLAVGVPGDREVDDKRLGAALEPAEYALLDEADFARHPFLVKGYVGPKALLDNGVRYLVDPRVVDGTAWITGADAPNKHVVGLVAGRDFVADGTIEAAEVRDGDPSPDGAGPLVSARGIEIGHIFQLGRKYTEAFSADVLGEDGKPVRLTMGSYGIGVSRLVAVIAEQQHDELGLRWPAAVAPFDVHVVIANKDDGARTGATELAGELDRLGLEVLLDDRKSSPGVKFKDAELLGVPWIVVVGRGWGDGVVELRDRFSGEKREIGVDDAATEILATVR</sequence>
<accession>A1UER2</accession>
<name>SYP_MYCSK</name>
<protein>
    <recommendedName>
        <fullName evidence="1">Proline--tRNA ligase</fullName>
        <ecNumber evidence="1">6.1.1.15</ecNumber>
    </recommendedName>
    <alternativeName>
        <fullName evidence="1">Prolyl-tRNA synthetase</fullName>
        <shortName evidence="1">ProRS</shortName>
    </alternativeName>
</protein>
<keyword id="KW-0030">Aminoacyl-tRNA synthetase</keyword>
<keyword id="KW-0067">ATP-binding</keyword>
<keyword id="KW-0963">Cytoplasm</keyword>
<keyword id="KW-0436">Ligase</keyword>
<keyword id="KW-0547">Nucleotide-binding</keyword>
<keyword id="KW-0648">Protein biosynthesis</keyword>
<reference key="1">
    <citation type="submission" date="2006-12" db="EMBL/GenBank/DDBJ databases">
        <title>Complete sequence of chromosome of Mycobacterium sp. KMS.</title>
        <authorList>
            <consortium name="US DOE Joint Genome Institute"/>
            <person name="Copeland A."/>
            <person name="Lucas S."/>
            <person name="Lapidus A."/>
            <person name="Barry K."/>
            <person name="Detter J.C."/>
            <person name="Glavina del Rio T."/>
            <person name="Hammon N."/>
            <person name="Israni S."/>
            <person name="Dalin E."/>
            <person name="Tice H."/>
            <person name="Pitluck S."/>
            <person name="Kiss H."/>
            <person name="Brettin T."/>
            <person name="Bruce D."/>
            <person name="Han C."/>
            <person name="Tapia R."/>
            <person name="Gilna P."/>
            <person name="Schmutz J."/>
            <person name="Larimer F."/>
            <person name="Land M."/>
            <person name="Hauser L."/>
            <person name="Kyrpides N."/>
            <person name="Mikhailova N."/>
            <person name="Miller C.D."/>
            <person name="Richardson P."/>
        </authorList>
    </citation>
    <scope>NUCLEOTIDE SEQUENCE [LARGE SCALE GENOMIC DNA]</scope>
    <source>
        <strain>KMS</strain>
    </source>
</reference>